<proteinExistence type="inferred from homology"/>
<organism>
    <name type="scientific">Penicillium rubens (strain ATCC 28089 / DSM 1075 / NRRL 1951 / Wisconsin 54-1255)</name>
    <name type="common">Penicillium chrysogenum</name>
    <dbReference type="NCBI Taxonomy" id="500485"/>
    <lineage>
        <taxon>Eukaryota</taxon>
        <taxon>Fungi</taxon>
        <taxon>Dikarya</taxon>
        <taxon>Ascomycota</taxon>
        <taxon>Pezizomycotina</taxon>
        <taxon>Eurotiomycetes</taxon>
        <taxon>Eurotiomycetidae</taxon>
        <taxon>Eurotiales</taxon>
        <taxon>Aspergillaceae</taxon>
        <taxon>Penicillium</taxon>
        <taxon>Penicillium chrysogenum species complex</taxon>
    </lineage>
</organism>
<sequence>MDSVSNLKIAVLINTPPDETDFQSVVRECFREAFASIAPTGEVDFYDPVVERKFPDASRYDLVVLSGGKIDAACSDPWVLGVLDYVRITARDLPKTKILAVCWGHQAVSRAFGGQVRPVPAGEITAIEDIRLTDAGMKFFPFAATSGSYRAIELHSGEVYTPPPGFISLAENQECFINDTNNVLTFQAHPEISHELASKLILEEDKKHSRNSSAEVLGIDRPTEGLKLLERVLQWLSE</sequence>
<accession>B6HLP3</accession>
<name>CHYE_PENRW</name>
<evidence type="ECO:0000255" key="1">
    <source>
        <dbReference type="PROSITE-ProRule" id="PRU00605"/>
    </source>
</evidence>
<evidence type="ECO:0000269" key="2">
    <source>
    </source>
</evidence>
<evidence type="ECO:0000303" key="3">
    <source>
    </source>
</evidence>
<evidence type="ECO:0000305" key="4"/>
<gene>
    <name evidence="3" type="primary">chyE</name>
    <name type="ORF">Pc21g12570</name>
</gene>
<reference key="1">
    <citation type="journal article" date="2008" name="Nat. Biotechnol.">
        <title>Genome sequencing and analysis of the filamentous fungus Penicillium chrysogenum.</title>
        <authorList>
            <person name="van den Berg M.A."/>
            <person name="Albang R."/>
            <person name="Albermann K."/>
            <person name="Badger J.H."/>
            <person name="Daran J.-M."/>
            <person name="Driessen A.J.M."/>
            <person name="Garcia-Estrada C."/>
            <person name="Fedorova N.D."/>
            <person name="Harris D.M."/>
            <person name="Heijne W.H.M."/>
            <person name="Joardar V.S."/>
            <person name="Kiel J.A.K.W."/>
            <person name="Kovalchuk A."/>
            <person name="Martin J.F."/>
            <person name="Nierman W.C."/>
            <person name="Nijland J.G."/>
            <person name="Pronk J.T."/>
            <person name="Roubos J.A."/>
            <person name="van der Klei I.J."/>
            <person name="van Peij N.N.M.E."/>
            <person name="Veenhuis M."/>
            <person name="von Doehren H."/>
            <person name="Wagner C."/>
            <person name="Wortman J.R."/>
            <person name="Bovenberg R.A.L."/>
        </authorList>
    </citation>
    <scope>NUCLEOTIDE SEQUENCE [LARGE SCALE GENOMIC DNA]</scope>
    <source>
        <strain>ATCC 28089 / DSM 1075 / NRRL 1951 / Wisconsin 54-1255</strain>
    </source>
</reference>
<reference key="2">
    <citation type="journal article" date="2017" name="Appl. Environ. Microbiol.">
        <title>Elucidation of the biosynthetic pathway for the production of the pigment chrysogine by Penicillium chrysogenum.</title>
        <authorList>
            <person name="Viggiano A."/>
            <person name="Salo O."/>
            <person name="Ali H."/>
            <person name="Szymanski W."/>
            <person name="Lankhorst P.P."/>
            <person name="Nygaard Y."/>
            <person name="Bovenberg R.A.L."/>
            <person name="Driessen A.J.M."/>
        </authorList>
    </citation>
    <scope>FUNCTION</scope>
    <scope>DISRUPTION PHENOTYPE</scope>
</reference>
<keyword id="KW-0315">Glutamine amidotransferase</keyword>
<keyword id="KW-0378">Hydrolase</keyword>
<keyword id="KW-1185">Reference proteome</keyword>
<dbReference type="EC" id="3.-.-.-" evidence="2"/>
<dbReference type="EMBL" id="AM920436">
    <property type="protein sequence ID" value="CAP96154.1"/>
    <property type="molecule type" value="Genomic_DNA"/>
</dbReference>
<dbReference type="RefSeq" id="XP_002568284.1">
    <property type="nucleotide sequence ID" value="XM_002568238.1"/>
</dbReference>
<dbReference type="SMR" id="B6HLP3"/>
<dbReference type="STRING" id="500485.B6HLP3"/>
<dbReference type="GeneID" id="8306443"/>
<dbReference type="KEGG" id="pcs:N7525_007826"/>
<dbReference type="VEuPathDB" id="FungiDB:PCH_Pc21g12570"/>
<dbReference type="eggNOG" id="KOG3179">
    <property type="taxonomic scope" value="Eukaryota"/>
</dbReference>
<dbReference type="HOGENOM" id="CLU_054974_0_0_1"/>
<dbReference type="OMA" id="EHERPEW"/>
<dbReference type="OrthoDB" id="92161at2759"/>
<dbReference type="BioCyc" id="PCHR:PC21G12570-MONOMER"/>
<dbReference type="Proteomes" id="UP000000724">
    <property type="component" value="Contig Pc00c21"/>
</dbReference>
<dbReference type="GO" id="GO:0005829">
    <property type="term" value="C:cytosol"/>
    <property type="evidence" value="ECO:0007669"/>
    <property type="project" value="TreeGrafter"/>
</dbReference>
<dbReference type="GO" id="GO:0005634">
    <property type="term" value="C:nucleus"/>
    <property type="evidence" value="ECO:0007669"/>
    <property type="project" value="TreeGrafter"/>
</dbReference>
<dbReference type="GO" id="GO:0016787">
    <property type="term" value="F:hydrolase activity"/>
    <property type="evidence" value="ECO:0007669"/>
    <property type="project" value="UniProtKB-KW"/>
</dbReference>
<dbReference type="CDD" id="cd01741">
    <property type="entry name" value="GATase1_1"/>
    <property type="match status" value="1"/>
</dbReference>
<dbReference type="Gene3D" id="3.40.50.880">
    <property type="match status" value="1"/>
</dbReference>
<dbReference type="InterPro" id="IPR044992">
    <property type="entry name" value="ChyE-like"/>
</dbReference>
<dbReference type="InterPro" id="IPR029062">
    <property type="entry name" value="Class_I_gatase-like"/>
</dbReference>
<dbReference type="InterPro" id="IPR017926">
    <property type="entry name" value="GATASE"/>
</dbReference>
<dbReference type="PANTHER" id="PTHR42695">
    <property type="entry name" value="GLUTAMINE AMIDOTRANSFERASE YLR126C-RELATED"/>
    <property type="match status" value="1"/>
</dbReference>
<dbReference type="PANTHER" id="PTHR42695:SF5">
    <property type="entry name" value="GLUTAMINE AMIDOTRANSFERASE YLR126C-RELATED"/>
    <property type="match status" value="1"/>
</dbReference>
<dbReference type="Pfam" id="PF00117">
    <property type="entry name" value="GATase"/>
    <property type="match status" value="1"/>
</dbReference>
<dbReference type="SUPFAM" id="SSF52317">
    <property type="entry name" value="Class I glutamine amidotransferase-like"/>
    <property type="match status" value="1"/>
</dbReference>
<protein>
    <recommendedName>
        <fullName evidence="4">Glutamine amidotransferase-like protein chyE</fullName>
        <ecNumber evidence="2">3.-.-.-</ecNumber>
    </recommendedName>
    <alternativeName>
        <fullName evidence="3">Chrysogine biosynthesis cluster protein E</fullName>
    </alternativeName>
    <alternativeName>
        <fullName evidence="3">Malonyl transferase chyE</fullName>
    </alternativeName>
</protein>
<comment type="function">
    <text evidence="2">Glutamine amidotransferase-like protein; part of the gene cluster that mediates the biosynthesis of the yellow pigment chrysogine (PubMed:29196288). the NRPS chyA mediates the condensation of anthranilic acid and alanine into the intermediate 2-(2-aminopropanamido)benzoic acid (PubMed:29196288). The remainder of the pathway is highly branched yielding at least 13 chrysogine-related compounds (PubMed:29196288). The malonyl transferase chyE converts 2-(2-aminopropanamido)benzoic acid and 2-(2-aminopropanamido)benzamidine into 2-(2-(2-carboxyacetamido)propanamido)benzoic acid and 3-((1-((2-carbamoylphenyl)amino)-1-oxopropan-2-yl)amino)-3-oxopropanoic acid, respectively (PubMed:29196288). ChyD is an amidase, being responsible for the amidation of the carboxylic acid moiety of 2-(2-aminopropanamido)benzoic acid, 2-(2-(2-carboxyacetamido)propanamido)benzoic acid and 2-(2-((4-amino-1-carboxy-4-oxobutyl)amino)propanamido)benzoic acid (PubMed:29196288). ChyC is involved in the same reactions as ChyD, but plays a more minor role in the amidation reactions compared to chyD (PubMed:29196288). The oxidoreductases chyH and chyM are involved in oxidation reactions that form N-pyruvoylanthranilamide from 2-(2-aminopropanamido)benzamidine and (1-((2-carbamoylphenyl)amino)-1-oxopropan-2-yl)glutamine, respectively (PubMed:29196288). N-pyruvoylanthranilamide is further converted via two further branches in the pathway, yielding chrysogine and additional chrysogine-related coumpounds (PubMed:29196288). Chrysogine is likely formed by a spontaneous ring closure from N-pyruvoylanthranilamide (PubMed:29196288).</text>
</comment>
<comment type="pathway">
    <text evidence="2">Pigment biosynthesis.</text>
</comment>
<comment type="disruption phenotype">
    <text evidence="2">Affects the production of 2-(2-(2-carboxyacetamido)propanamido)benzoic acid and downstream compounds and accumulates 2-(2-aminopropanamido)benzoic acid (PubMed:29196288).</text>
</comment>
<comment type="similarity">
    <text evidence="4">Belongs to the peptidase C26 family.</text>
</comment>
<feature type="chain" id="PRO_0000443348" description="Glutamine amidotransferase-like protein chyE">
    <location>
        <begin position="1"/>
        <end position="238"/>
    </location>
</feature>
<feature type="domain" description="Glutamine amidotransferase type-1" evidence="1">
    <location>
        <begin position="8"/>
        <end position="238"/>
    </location>
</feature>
<feature type="active site" description="Nucleophile" evidence="1">
    <location>
        <position position="102"/>
    </location>
</feature>
<feature type="active site" evidence="1">
    <location>
        <position position="189"/>
    </location>
</feature>
<feature type="active site" evidence="1">
    <location>
        <position position="191"/>
    </location>
</feature>